<comment type="function">
    <text evidence="1">One of the primary rRNA binding proteins, this protein initially binds near the 5'-end of the 23S rRNA. It is important during the early stages of 50S assembly. It makes multiple contacts with different domains of the 23S rRNA in the assembled 50S subunit and ribosome.</text>
</comment>
<comment type="function">
    <text evidence="1">Forms part of the polypeptide exit tunnel.</text>
</comment>
<comment type="subunit">
    <text evidence="1">Part of the 50S ribosomal subunit.</text>
</comment>
<comment type="similarity">
    <text evidence="1">Belongs to the universal ribosomal protein uL4 family.</text>
</comment>
<gene>
    <name evidence="1" type="primary">rplD</name>
    <name type="ordered locus">BDU_482</name>
</gene>
<dbReference type="EMBL" id="CP000976">
    <property type="protein sequence ID" value="ACH93423.1"/>
    <property type="molecule type" value="Genomic_DNA"/>
</dbReference>
<dbReference type="RefSeq" id="WP_012538233.1">
    <property type="nucleotide sequence ID" value="NC_011229.1"/>
</dbReference>
<dbReference type="SMR" id="B5RM37"/>
<dbReference type="STRING" id="412419.BDU_482"/>
<dbReference type="KEGG" id="bdu:BDU_482"/>
<dbReference type="eggNOG" id="COG0088">
    <property type="taxonomic scope" value="Bacteria"/>
</dbReference>
<dbReference type="HOGENOM" id="CLU_041575_5_2_12"/>
<dbReference type="OrthoDB" id="9803201at2"/>
<dbReference type="Proteomes" id="UP000000611">
    <property type="component" value="Chromosome"/>
</dbReference>
<dbReference type="GO" id="GO:1990904">
    <property type="term" value="C:ribonucleoprotein complex"/>
    <property type="evidence" value="ECO:0007669"/>
    <property type="project" value="UniProtKB-KW"/>
</dbReference>
<dbReference type="GO" id="GO:0005840">
    <property type="term" value="C:ribosome"/>
    <property type="evidence" value="ECO:0007669"/>
    <property type="project" value="UniProtKB-KW"/>
</dbReference>
<dbReference type="GO" id="GO:0019843">
    <property type="term" value="F:rRNA binding"/>
    <property type="evidence" value="ECO:0007669"/>
    <property type="project" value="UniProtKB-UniRule"/>
</dbReference>
<dbReference type="GO" id="GO:0003735">
    <property type="term" value="F:structural constituent of ribosome"/>
    <property type="evidence" value="ECO:0007669"/>
    <property type="project" value="InterPro"/>
</dbReference>
<dbReference type="GO" id="GO:0006412">
    <property type="term" value="P:translation"/>
    <property type="evidence" value="ECO:0007669"/>
    <property type="project" value="UniProtKB-UniRule"/>
</dbReference>
<dbReference type="Gene3D" id="3.40.1370.10">
    <property type="match status" value="1"/>
</dbReference>
<dbReference type="HAMAP" id="MF_01328_B">
    <property type="entry name" value="Ribosomal_uL4_B"/>
    <property type="match status" value="1"/>
</dbReference>
<dbReference type="InterPro" id="IPR002136">
    <property type="entry name" value="Ribosomal_uL4"/>
</dbReference>
<dbReference type="InterPro" id="IPR013005">
    <property type="entry name" value="Ribosomal_uL4-like"/>
</dbReference>
<dbReference type="InterPro" id="IPR023574">
    <property type="entry name" value="Ribosomal_uL4_dom_sf"/>
</dbReference>
<dbReference type="NCBIfam" id="TIGR03953">
    <property type="entry name" value="rplD_bact"/>
    <property type="match status" value="1"/>
</dbReference>
<dbReference type="PANTHER" id="PTHR10746">
    <property type="entry name" value="50S RIBOSOMAL PROTEIN L4"/>
    <property type="match status" value="1"/>
</dbReference>
<dbReference type="PANTHER" id="PTHR10746:SF6">
    <property type="entry name" value="LARGE RIBOSOMAL SUBUNIT PROTEIN UL4M"/>
    <property type="match status" value="1"/>
</dbReference>
<dbReference type="Pfam" id="PF00573">
    <property type="entry name" value="Ribosomal_L4"/>
    <property type="match status" value="1"/>
</dbReference>
<dbReference type="SUPFAM" id="SSF52166">
    <property type="entry name" value="Ribosomal protein L4"/>
    <property type="match status" value="1"/>
</dbReference>
<keyword id="KW-0687">Ribonucleoprotein</keyword>
<keyword id="KW-0689">Ribosomal protein</keyword>
<keyword id="KW-0694">RNA-binding</keyword>
<keyword id="KW-0699">rRNA-binding</keyword>
<proteinExistence type="inferred from homology"/>
<feature type="chain" id="PRO_1000142085" description="Large ribosomal subunit protein uL4">
    <location>
        <begin position="1"/>
        <end position="209"/>
    </location>
</feature>
<reference key="1">
    <citation type="journal article" date="2008" name="PLoS Genet.">
        <title>The genome of Borrelia recurrentis, the agent of deadly louse-borne relapsing fever, is a degraded subset of tick-borne Borrelia duttonii.</title>
        <authorList>
            <person name="Lescot M."/>
            <person name="Audic S."/>
            <person name="Robert C."/>
            <person name="Nguyen T.T."/>
            <person name="Blanc G."/>
            <person name="Cutler S.J."/>
            <person name="Wincker P."/>
            <person name="Couloux A."/>
            <person name="Claverie J.-M."/>
            <person name="Raoult D."/>
            <person name="Drancourt M."/>
        </authorList>
    </citation>
    <scope>NUCLEOTIDE SEQUENCE [LARGE SCALE GENOMIC DNA]</scope>
    <source>
        <strain>Ly</strain>
    </source>
</reference>
<name>RL4_BORDL</name>
<protein>
    <recommendedName>
        <fullName evidence="1">Large ribosomal subunit protein uL4</fullName>
    </recommendedName>
    <alternativeName>
        <fullName evidence="2">50S ribosomal protein L4</fullName>
    </alternativeName>
</protein>
<evidence type="ECO:0000255" key="1">
    <source>
        <dbReference type="HAMAP-Rule" id="MF_01328"/>
    </source>
</evidence>
<evidence type="ECO:0000305" key="2"/>
<organism>
    <name type="scientific">Borrelia duttonii (strain Ly)</name>
    <dbReference type="NCBI Taxonomy" id="412419"/>
    <lineage>
        <taxon>Bacteria</taxon>
        <taxon>Pseudomonadati</taxon>
        <taxon>Spirochaetota</taxon>
        <taxon>Spirochaetia</taxon>
        <taxon>Spirochaetales</taxon>
        <taxon>Borreliaceae</taxon>
        <taxon>Borrelia</taxon>
    </lineage>
</organism>
<sequence length="209" mass="23454">MERKVFSKDGQELRTIDLDDGVFNIDVSYGSIYNAINNELANLRVGTASTKTRAEVRGSSKKPWKQKGTGRARVGTRRNPVWVGGGIALGPKPRDYSYKLPKKVKRLAFKSVLSLCASVDDRLKVVENFTIDSGKTKELALIIKNFIKHNGRTVILLGNDDQMIKRAGKNIRDLKILSFNRLRVVDLFYTKNLIALESAINGLNELYVK</sequence>
<accession>B5RM37</accession>